<organism>
    <name type="scientific">Epstein-Barr virus (strain AG876)</name>
    <name type="common">HHV-4</name>
    <name type="synonym">Human herpesvirus 4</name>
    <dbReference type="NCBI Taxonomy" id="82830"/>
    <lineage>
        <taxon>Viruses</taxon>
        <taxon>Duplodnaviria</taxon>
        <taxon>Heunggongvirae</taxon>
        <taxon>Peploviricota</taxon>
        <taxon>Herviviricetes</taxon>
        <taxon>Herpesvirales</taxon>
        <taxon>Orthoherpesviridae</taxon>
        <taxon>Gammaherpesvirinae</taxon>
        <taxon>Lymphocryptovirus</taxon>
        <taxon>Lymphocryptovirus humangamma4</taxon>
        <taxon>Epstein-Barr virus (strain GD1)</taxon>
    </lineage>
</organism>
<feature type="chain" id="PRO_0000415971" description="Cytoplasmic envelopment protein 2">
    <location>
        <begin position="1"/>
        <end position="336"/>
    </location>
</feature>
<feature type="region of interest" description="Interaction with host BBLF1" evidence="1">
    <location>
        <begin position="67"/>
        <end position="69"/>
    </location>
</feature>
<accession>P0CK54</accession>
<accession>P03221</accession>
<accession>Q777C8</accession>
<protein>
    <recommendedName>
        <fullName evidence="2">Cytoplasmic envelopment protein 2</fullName>
    </recommendedName>
    <alternativeName>
        <fullName evidence="2">Tegument protein BGLF2</fullName>
    </alternativeName>
</protein>
<keyword id="KW-1078">G1/S host cell cycle checkpoint dysregulation by virus</keyword>
<keyword id="KW-1035">Host cytoplasm</keyword>
<keyword id="KW-1040">Host Golgi apparatus</keyword>
<keyword id="KW-1048">Host nucleus</keyword>
<keyword id="KW-0945">Host-virus interaction</keyword>
<keyword id="KW-1090">Inhibition of host innate immune response by virus</keyword>
<keyword id="KW-1114">Inhibition of host interferon signaling pathway by virus</keyword>
<keyword id="KW-1105">Inhibition of host STAT1 by virus</keyword>
<keyword id="KW-1106">Inhibition of host STAT2 by virus</keyword>
<keyword id="KW-1112">Inhibition of host TYK2 by virus</keyword>
<keyword id="KW-0922">Interferon antiviral system evasion</keyword>
<keyword id="KW-0426">Late protein</keyword>
<keyword id="KW-1121">Modulation of host cell cycle by virus</keyword>
<keyword id="KW-1185">Reference proteome</keyword>
<keyword id="KW-0899">Viral immunoevasion</keyword>
<keyword id="KW-0946">Virion</keyword>
<keyword id="KW-0920">Virion tegument</keyword>
<gene>
    <name type="ORF">BGLF2</name>
</gene>
<proteinExistence type="inferred from homology"/>
<sequence length="336" mass="36888">MASAANSSREQLRKFLNKECLWVLSDASTPQMKVYTATTAVSAVYVPQIAGPPKTYMNVTLIVLKPKKKPTYVTVYINGTLATVARPEVLFTKAVQGPHSLTLMYFGVFSDAVGEAVPVEIRGNPVVTCTDLTTAHVFTTSTAVKTVEELQDITPSEIIPLGRGGAWYAEGALYMFFVNMDMLMCCPNMPTFPSLTHFINLLTRCDNGECVTCYGAGAHVNILRGWTEDDSPGTSGTCPCLLPCTALNNDYVPITGHRALLGLMFKPEDAPFVVGLRFNPPKMHPDMSRVLQGVLANGKEVPCTAQPWTLLRFSDLYSRAMLYNCQVLKRQVLHSY</sequence>
<evidence type="ECO:0000250" key="1">
    <source>
        <dbReference type="UniProtKB" id="P0CK53"/>
    </source>
</evidence>
<evidence type="ECO:0000255" key="2">
    <source>
        <dbReference type="HAMAP-Rule" id="MF_04039"/>
    </source>
</evidence>
<reference key="1">
    <citation type="journal article" date="2006" name="Virology">
        <title>The genome of Epstein-Barr virus type 2 strain AG876.</title>
        <authorList>
            <person name="Dolan A."/>
            <person name="Addison C."/>
            <person name="Gatherer D."/>
            <person name="Davison A.J."/>
            <person name="McGeoch D.J."/>
        </authorList>
    </citation>
    <scope>NUCLEOTIDE SEQUENCE [LARGE SCALE GENOMIC DNA]</scope>
</reference>
<dbReference type="EMBL" id="DQ279927">
    <property type="protein sequence ID" value="ABB89265.1"/>
    <property type="molecule type" value="Genomic_DNA"/>
</dbReference>
<dbReference type="RefSeq" id="YP_001129486.1">
    <property type="nucleotide sequence ID" value="NC_009334.1"/>
</dbReference>
<dbReference type="RefSeq" id="YP_401691.1">
    <property type="nucleotide sequence ID" value="NC_007605.1"/>
</dbReference>
<dbReference type="DNASU" id="3783768"/>
<dbReference type="GeneID" id="3783768"/>
<dbReference type="KEGG" id="vg:3783768"/>
<dbReference type="KEGG" id="vg:5176204"/>
<dbReference type="Proteomes" id="UP000007639">
    <property type="component" value="Genome"/>
</dbReference>
<dbReference type="GO" id="GO:0044177">
    <property type="term" value="C:host cell Golgi apparatus"/>
    <property type="evidence" value="ECO:0007669"/>
    <property type="project" value="UniProtKB-SubCell"/>
</dbReference>
<dbReference type="GO" id="GO:0042025">
    <property type="term" value="C:host cell nucleus"/>
    <property type="evidence" value="ECO:0007669"/>
    <property type="project" value="UniProtKB-SubCell"/>
</dbReference>
<dbReference type="GO" id="GO:0019033">
    <property type="term" value="C:viral tegument"/>
    <property type="evidence" value="ECO:0007669"/>
    <property type="project" value="UniProtKB-SubCell"/>
</dbReference>
<dbReference type="GO" id="GO:0039645">
    <property type="term" value="P:symbiont-mediated perturbation of host cell cycle G1/S transition checkpoint"/>
    <property type="evidence" value="ECO:0007669"/>
    <property type="project" value="UniProtKB-KW"/>
</dbReference>
<dbReference type="GO" id="GO:0039574">
    <property type="term" value="P:symbiont-mediated suppression of host JAK-STAT cascade via inhibition of host TYK2 activity"/>
    <property type="evidence" value="ECO:0007669"/>
    <property type="project" value="UniProtKB-KW"/>
</dbReference>
<dbReference type="GO" id="GO:0039563">
    <property type="term" value="P:symbiont-mediated suppression of host JAK-STAT cascade via inhibition of STAT1 activity"/>
    <property type="evidence" value="ECO:0007669"/>
    <property type="project" value="UniProtKB-KW"/>
</dbReference>
<dbReference type="GO" id="GO:0039564">
    <property type="term" value="P:symbiont-mediated suppression of host JAK-STAT cascade via inhibition of STAT2 activity"/>
    <property type="evidence" value="ECO:0007669"/>
    <property type="project" value="UniProtKB-KW"/>
</dbReference>
<dbReference type="GO" id="GO:0039502">
    <property type="term" value="P:symbiont-mediated suppression of host type I interferon-mediated signaling pathway"/>
    <property type="evidence" value="ECO:0007669"/>
    <property type="project" value="UniProtKB-KW"/>
</dbReference>
<dbReference type="HAMAP" id="MF_04039">
    <property type="entry name" value="HSV_CEP2"/>
    <property type="match status" value="1"/>
</dbReference>
<dbReference type="InterPro" id="IPR004286">
    <property type="entry name" value="Herpes_UL16/UL94"/>
</dbReference>
<dbReference type="Pfam" id="PF03044">
    <property type="entry name" value="Herpes_UL16"/>
    <property type="match status" value="1"/>
</dbReference>
<comment type="function">
    <text evidence="2">Plays a critical role in cytoplasmic virus egress. Participates in the final step of tegumentation and envelope acquisition within the host cytoplasm by directly interacting with the capsid. Upon virion binding to target cell, a signaling cascade is triggered to disrupt the interaction with the capsid, thereby preparing capsid uncoating. Activates the AP-1 pathway and enhances EBV reactivation and virus release. Inhibits type I IFN-induced TYK2, STAT1 and STAT3 phosphorylation, thereby impairing type I IFN signaling and counteracting the ability of IFN-alpha to suppress the reactivation of EBV. Recruits SHP1 phosphatase to dephosphorylate STAT1. Mediates STAT2 ubiquitination and proteasomal degradation. Also suppresses type II and type III IFN signaling. Contributes to G1/S arrest in the host cell. Acts as an miRNA regulator that interferes with the function of RISC in miRNA-mediated mRNA silencing. As a result, SUMOylation is increased. When encapsulated in the exosomes released by EBV-infected host cells, may facilitate the infection in recipient cells.</text>
</comment>
<comment type="subunit">
    <text evidence="2">Homodimer. Interacts with BBLF1. Interacts with the capsid. Interacts with BKRF4 (via C-terminus); this interaction is important for infectious virion production. Interacts with host TYK2; this interaction participates to the inhibition of host type I IFN signaling. Interacts with host STAT1; this interaction leads to STAT1 dephosphorylation and inhibition. Interacts with host STAT2; this interaction leads to STAT2 degradation. Interacts with host CUL1; this interaction might facilitate CUL1 recruitment to STAT2, leading to ubiquitination and degradation of the latter. Interacts with host AGO2; this interaction participates to the host miRNA regulation leading to enhanced SUMOylation.</text>
</comment>
<comment type="subcellular location">
    <subcellularLocation>
        <location evidence="2">Virion tegument</location>
    </subcellularLocation>
    <subcellularLocation>
        <location evidence="2">Host cytoplasm</location>
    </subcellularLocation>
    <subcellularLocation>
        <location evidence="2">Host nucleus</location>
    </subcellularLocation>
    <subcellularLocation>
        <location evidence="2">Host Golgi apparatus</location>
        <location evidence="2">Host trans-Golgi network</location>
    </subcellularLocation>
    <text evidence="2">Localizes in the host nucleus up to 18 hours postinfection, but at later times localizes to punctate, cytoplasmic structures. Associates with the capsid before the final envelopment. Recruited to the TGN via the interaction with BBLF1. Also found in the exosomes released by the host cell.</text>
</comment>
<comment type="induction">
    <text evidence="2">Expressed in the late phase of the viral replicative cycle.</text>
</comment>
<comment type="similarity">
    <text evidence="2">Belongs to the herpesviridae cytoplasmic envelopment protein 2 family.</text>
</comment>
<name>CEP2_EBVA8</name>
<organismHost>
    <name type="scientific">Homo sapiens</name>
    <name type="common">Human</name>
    <dbReference type="NCBI Taxonomy" id="9606"/>
</organismHost>